<gene>
    <name evidence="1" type="primary">rnp4</name>
    <name type="ordered locus">MMP0921</name>
</gene>
<name>RNP4_METMP</name>
<evidence type="ECO:0000255" key="1">
    <source>
        <dbReference type="HAMAP-Rule" id="MF_00757"/>
    </source>
</evidence>
<evidence type="ECO:0000269" key="2">
    <source>
    </source>
</evidence>
<reference key="1">
    <citation type="journal article" date="2004" name="J. Bacteriol.">
        <title>Complete genome sequence of the genetically tractable hydrogenotrophic methanogen Methanococcus maripaludis.</title>
        <authorList>
            <person name="Hendrickson E.L."/>
            <person name="Kaul R."/>
            <person name="Zhou Y."/>
            <person name="Bovee D."/>
            <person name="Chapman P."/>
            <person name="Chung J."/>
            <person name="Conway de Macario E."/>
            <person name="Dodsworth J.A."/>
            <person name="Gillett W."/>
            <person name="Graham D.E."/>
            <person name="Hackett M."/>
            <person name="Haydock A.K."/>
            <person name="Kang A."/>
            <person name="Land M.L."/>
            <person name="Levy R."/>
            <person name="Lie T.J."/>
            <person name="Major T.A."/>
            <person name="Moore B.C."/>
            <person name="Porat I."/>
            <person name="Palmeiri A."/>
            <person name="Rouse G."/>
            <person name="Saenphimmachak C."/>
            <person name="Soell D."/>
            <person name="Van Dien S."/>
            <person name="Wang T."/>
            <person name="Whitman W.B."/>
            <person name="Xia Q."/>
            <person name="Zhang Y."/>
            <person name="Larimer F.W."/>
            <person name="Olson M.V."/>
            <person name="Leigh J.A."/>
        </authorList>
    </citation>
    <scope>NUCLEOTIDE SEQUENCE [LARGE SCALE GENOMIC DNA]</scope>
    <source>
        <strain>DSM 14266 / JCM 13030 / NBRC 101832 / S2 / LL</strain>
    </source>
</reference>
<reference key="2">
    <citation type="journal article" date="2010" name="Proc. Natl. Acad. Sci. U.S.A.">
        <title>Ribosomal protein L7Ae is a subunit of archaeal RNase P.</title>
        <authorList>
            <person name="Cho I.M."/>
            <person name="Lai L.B."/>
            <person name="Susanti D."/>
            <person name="Mukhopadhyay B."/>
            <person name="Gopalan V."/>
        </authorList>
    </citation>
    <scope>FUNCTION</scope>
    <scope>BIOPHYSICOCHEMICAL PROPERTIES</scope>
    <scope>SUBUNIT</scope>
    <scope>SUBCELLULAR LOCATION</scope>
    <source>
        <strain>DSM 14266 / JCM 13030 / NBRC 101832 / S2 / LL</strain>
    </source>
</reference>
<protein>
    <recommendedName>
        <fullName evidence="1">Ribonuclease P protein component 4</fullName>
        <shortName evidence="1">RNase P component 4</shortName>
        <ecNumber evidence="1">3.1.26.5</ecNumber>
    </recommendedName>
    <alternativeName>
        <fullName evidence="1">Rpp21</fullName>
    </alternativeName>
</protein>
<organism>
    <name type="scientific">Methanococcus maripaludis (strain DSM 14266 / JCM 13030 / NBRC 101832 / S2 / LL)</name>
    <dbReference type="NCBI Taxonomy" id="267377"/>
    <lineage>
        <taxon>Archaea</taxon>
        <taxon>Methanobacteriati</taxon>
        <taxon>Methanobacteriota</taxon>
        <taxon>Methanomada group</taxon>
        <taxon>Methanococci</taxon>
        <taxon>Methanococcales</taxon>
        <taxon>Methanococcaceae</taxon>
        <taxon>Methanococcus</taxon>
    </lineage>
</organism>
<comment type="function">
    <text evidence="1 2">Part of ribonuclease P, a protein complex that generates mature tRNA molecules by cleaving their 5'-ends.</text>
</comment>
<comment type="catalytic activity">
    <reaction evidence="1">
        <text>Endonucleolytic cleavage of RNA, removing 5'-extranucleotides from tRNA precursor.</text>
        <dbReference type="EC" id="3.1.26.5"/>
    </reaction>
</comment>
<comment type="cofactor">
    <cofactor evidence="1">
        <name>Zn(2+)</name>
        <dbReference type="ChEBI" id="CHEBI:29105"/>
    </cofactor>
    <text evidence="1">Binds 1 zinc ion per subunit.</text>
</comment>
<comment type="biophysicochemical properties">
    <kinetics>
        <KM evidence="2">2.6 uM for pre-tRNA-Tyr in the absence of L7Ae</KM>
        <KM evidence="2">0.044 uM for pre-tRNA-Tyr in the presence of L7Ae</KM>
        <text>kcat 10 min(-1) in absence of L7Ae, 63 min(-1) in presence of L7Ae. Kinetic parameters determined at 37 degrees Celsius.</text>
    </kinetics>
    <temperatureDependence>
        <text evidence="2">Optimum temperature is 36-38 degrees Celsius in the absence of L7Ae, 48-50 degrees Celsius in presence of L7Ae.</text>
    </temperatureDependence>
</comment>
<comment type="subunit">
    <text evidence="2">Consists of a catalytic RNA component and at least 5 protein subunits.</text>
</comment>
<comment type="subcellular location">
    <subcellularLocation>
        <location evidence="1 2">Cytoplasm</location>
    </subcellularLocation>
</comment>
<comment type="similarity">
    <text evidence="1">Belongs to the eukaryotic/archaeal RNase P protein component 4 family.</text>
</comment>
<sequence length="110" mass="12891">MKLKKKFLEKSKKVAEERINILMNLAEKESNSGKTERSKNYVLLGKKIAMRMRMPYPKEWKRRICKNCGSFLIYGKNARVRTKAKNYPHVVITCLECNSITRIPIKTAKK</sequence>
<dbReference type="EC" id="3.1.26.5" evidence="1"/>
<dbReference type="EMBL" id="BX950229">
    <property type="protein sequence ID" value="CAF30477.1"/>
    <property type="molecule type" value="Genomic_DNA"/>
</dbReference>
<dbReference type="RefSeq" id="WP_011170865.1">
    <property type="nucleotide sequence ID" value="NC_005791.1"/>
</dbReference>
<dbReference type="SMR" id="P62378"/>
<dbReference type="STRING" id="267377.MMP0921"/>
<dbReference type="EnsemblBacteria" id="CAF30477">
    <property type="protein sequence ID" value="CAF30477"/>
    <property type="gene ID" value="MMP0921"/>
</dbReference>
<dbReference type="GeneID" id="2761316"/>
<dbReference type="KEGG" id="mmp:MMP0921"/>
<dbReference type="PATRIC" id="fig|267377.15.peg.949"/>
<dbReference type="eggNOG" id="arCOG04345">
    <property type="taxonomic scope" value="Archaea"/>
</dbReference>
<dbReference type="HOGENOM" id="CLU_079140_3_1_2"/>
<dbReference type="OrthoDB" id="10058at2157"/>
<dbReference type="BRENDA" id="3.1.26.5">
    <property type="organism ID" value="3262"/>
</dbReference>
<dbReference type="Proteomes" id="UP000000590">
    <property type="component" value="Chromosome"/>
</dbReference>
<dbReference type="GO" id="GO:0005737">
    <property type="term" value="C:cytoplasm"/>
    <property type="evidence" value="ECO:0000314"/>
    <property type="project" value="UniProtKB"/>
</dbReference>
<dbReference type="GO" id="GO:0030677">
    <property type="term" value="C:ribonuclease P complex"/>
    <property type="evidence" value="ECO:0000314"/>
    <property type="project" value="UniProtKB"/>
</dbReference>
<dbReference type="GO" id="GO:0004526">
    <property type="term" value="F:ribonuclease P activity"/>
    <property type="evidence" value="ECO:0000314"/>
    <property type="project" value="UniProtKB"/>
</dbReference>
<dbReference type="GO" id="GO:0008270">
    <property type="term" value="F:zinc ion binding"/>
    <property type="evidence" value="ECO:0007669"/>
    <property type="project" value="UniProtKB-UniRule"/>
</dbReference>
<dbReference type="GO" id="GO:0001682">
    <property type="term" value="P:tRNA 5'-leader removal"/>
    <property type="evidence" value="ECO:0000314"/>
    <property type="project" value="UniProtKB"/>
</dbReference>
<dbReference type="Gene3D" id="6.20.50.20">
    <property type="match status" value="1"/>
</dbReference>
<dbReference type="Gene3D" id="1.20.5.420">
    <property type="entry name" value="Immunoglobulin FC, subunit C"/>
    <property type="match status" value="1"/>
</dbReference>
<dbReference type="HAMAP" id="MF_00757">
    <property type="entry name" value="RNase_P_4"/>
    <property type="match status" value="1"/>
</dbReference>
<dbReference type="InterPro" id="IPR016432">
    <property type="entry name" value="RNP4"/>
</dbReference>
<dbReference type="InterPro" id="IPR007175">
    <property type="entry name" value="Rpr2/Snm1/Rpp21"/>
</dbReference>
<dbReference type="PANTHER" id="PTHR14742:SF0">
    <property type="entry name" value="RIBONUCLEASE P PROTEIN SUBUNIT P21"/>
    <property type="match status" value="1"/>
</dbReference>
<dbReference type="PANTHER" id="PTHR14742">
    <property type="entry name" value="RIBONUCLEASE P SUBUNIT P21"/>
    <property type="match status" value="1"/>
</dbReference>
<dbReference type="Pfam" id="PF04032">
    <property type="entry name" value="Rpr2"/>
    <property type="match status" value="1"/>
</dbReference>
<dbReference type="PIRSF" id="PIRSF004878">
    <property type="entry name" value="RNase_P_4"/>
    <property type="match status" value="1"/>
</dbReference>
<keyword id="KW-0963">Cytoplasm</keyword>
<keyword id="KW-0255">Endonuclease</keyword>
<keyword id="KW-0378">Hydrolase</keyword>
<keyword id="KW-0479">Metal-binding</keyword>
<keyword id="KW-0540">Nuclease</keyword>
<keyword id="KW-1185">Reference proteome</keyword>
<keyword id="KW-0819">tRNA processing</keyword>
<keyword id="KW-0862">Zinc</keyword>
<accession>P62378</accession>
<proteinExistence type="evidence at protein level"/>
<feature type="chain" id="PRO_0000153855" description="Ribonuclease P protein component 4">
    <location>
        <begin position="1"/>
        <end position="110"/>
    </location>
</feature>
<feature type="binding site" evidence="1">
    <location>
        <position position="65"/>
    </location>
    <ligand>
        <name>Zn(2+)</name>
        <dbReference type="ChEBI" id="CHEBI:29105"/>
    </ligand>
</feature>
<feature type="binding site" evidence="1">
    <location>
        <position position="68"/>
    </location>
    <ligand>
        <name>Zn(2+)</name>
        <dbReference type="ChEBI" id="CHEBI:29105"/>
    </ligand>
</feature>
<feature type="binding site" evidence="1">
    <location>
        <position position="94"/>
    </location>
    <ligand>
        <name>Zn(2+)</name>
        <dbReference type="ChEBI" id="CHEBI:29105"/>
    </ligand>
</feature>
<feature type="binding site" evidence="1">
    <location>
        <position position="97"/>
    </location>
    <ligand>
        <name>Zn(2+)</name>
        <dbReference type="ChEBI" id="CHEBI:29105"/>
    </ligand>
</feature>